<keyword id="KW-1003">Cell membrane</keyword>
<keyword id="KW-0449">Lipoprotein</keyword>
<keyword id="KW-0472">Membrane</keyword>
<keyword id="KW-0564">Palmitate</keyword>
<keyword id="KW-0732">Signal</keyword>
<sequence>MTMKYFCSVMIAIALVGCTATPPPTQKAQQSKVSPTRTLDMEALCKAQAAQRYNTGAQKIAVTGFEQFQGSYEMRGNTFRKESFVCSFDADGQFLHLSMR</sequence>
<gene>
    <name type="primary">ysaB</name>
    <name type="ordered locus">SPA3508</name>
</gene>
<protein>
    <recommendedName>
        <fullName>Uncharacterized lipoprotein YsaB</fullName>
    </recommendedName>
</protein>
<organism>
    <name type="scientific">Salmonella paratyphi A (strain ATCC 9150 / SARB42)</name>
    <dbReference type="NCBI Taxonomy" id="295319"/>
    <lineage>
        <taxon>Bacteria</taxon>
        <taxon>Pseudomonadati</taxon>
        <taxon>Pseudomonadota</taxon>
        <taxon>Gammaproteobacteria</taxon>
        <taxon>Enterobacterales</taxon>
        <taxon>Enterobacteriaceae</taxon>
        <taxon>Salmonella</taxon>
    </lineage>
</organism>
<name>YSAB_SALPA</name>
<proteinExistence type="inferred from homology"/>
<reference key="1">
    <citation type="journal article" date="2004" name="Nat. Genet.">
        <title>Comparison of genome degradation in Paratyphi A and Typhi, human-restricted serovars of Salmonella enterica that cause typhoid.</title>
        <authorList>
            <person name="McClelland M."/>
            <person name="Sanderson K.E."/>
            <person name="Clifton S.W."/>
            <person name="Latreille P."/>
            <person name="Porwollik S."/>
            <person name="Sabo A."/>
            <person name="Meyer R."/>
            <person name="Bieri T."/>
            <person name="Ozersky P."/>
            <person name="McLellan M."/>
            <person name="Harkins C.R."/>
            <person name="Wang C."/>
            <person name="Nguyen C."/>
            <person name="Berghoff A."/>
            <person name="Elliott G."/>
            <person name="Kohlberg S."/>
            <person name="Strong C."/>
            <person name="Du F."/>
            <person name="Carter J."/>
            <person name="Kremizki C."/>
            <person name="Layman D."/>
            <person name="Leonard S."/>
            <person name="Sun H."/>
            <person name="Fulton L."/>
            <person name="Nash W."/>
            <person name="Miner T."/>
            <person name="Minx P."/>
            <person name="Delehaunty K."/>
            <person name="Fronick C."/>
            <person name="Magrini V."/>
            <person name="Nhan M."/>
            <person name="Warren W."/>
            <person name="Florea L."/>
            <person name="Spieth J."/>
            <person name="Wilson R.K."/>
        </authorList>
    </citation>
    <scope>NUCLEOTIDE SEQUENCE [LARGE SCALE GENOMIC DNA]</scope>
    <source>
        <strain>ATCC 9150 / SARB42</strain>
    </source>
</reference>
<accession>Q5PLN0</accession>
<comment type="subcellular location">
    <subcellularLocation>
        <location evidence="1">Cell membrane</location>
        <topology evidence="1">Lipid-anchor</topology>
    </subcellularLocation>
</comment>
<evidence type="ECO:0000255" key="1">
    <source>
        <dbReference type="PROSITE-ProRule" id="PRU00303"/>
    </source>
</evidence>
<feature type="signal peptide" evidence="1">
    <location>
        <begin position="1"/>
        <end position="17"/>
    </location>
</feature>
<feature type="chain" id="PRO_0000268614" description="Uncharacterized lipoprotein YsaB">
    <location>
        <begin position="18"/>
        <end position="100"/>
    </location>
</feature>
<feature type="lipid moiety-binding region" description="N-palmitoyl cysteine" evidence="1">
    <location>
        <position position="18"/>
    </location>
</feature>
<feature type="lipid moiety-binding region" description="S-diacylglycerol cysteine" evidence="1">
    <location>
        <position position="18"/>
    </location>
</feature>
<dbReference type="EMBL" id="CP000026">
    <property type="protein sequence ID" value="AAV79313.1"/>
    <property type="molecule type" value="Genomic_DNA"/>
</dbReference>
<dbReference type="RefSeq" id="WP_000178128.1">
    <property type="nucleotide sequence ID" value="NC_006511.1"/>
</dbReference>
<dbReference type="KEGG" id="spt:SPA3508"/>
<dbReference type="HOGENOM" id="CLU_162515_0_0_6"/>
<dbReference type="Proteomes" id="UP000008185">
    <property type="component" value="Chromosome"/>
</dbReference>
<dbReference type="GO" id="GO:0005886">
    <property type="term" value="C:plasma membrane"/>
    <property type="evidence" value="ECO:0007669"/>
    <property type="project" value="UniProtKB-SubCell"/>
</dbReference>
<dbReference type="InterPro" id="IPR025728">
    <property type="entry name" value="YsaB-like"/>
</dbReference>
<dbReference type="Pfam" id="PF13983">
    <property type="entry name" value="YsaB"/>
    <property type="match status" value="1"/>
</dbReference>
<dbReference type="PROSITE" id="PS51257">
    <property type="entry name" value="PROKAR_LIPOPROTEIN"/>
    <property type="match status" value="1"/>
</dbReference>